<keyword id="KW-0119">Carbohydrate metabolism</keyword>
<keyword id="KW-0378">Hydrolase</keyword>
<keyword id="KW-0464">Manganese</keyword>
<keyword id="KW-1185">Reference proteome</keyword>
<organism>
    <name type="scientific">Staphylococcus saprophyticus subsp. saprophyticus (strain ATCC 15305 / DSM 20229 / NCIMB 8711 / NCTC 7292 / S-41)</name>
    <dbReference type="NCBI Taxonomy" id="342451"/>
    <lineage>
        <taxon>Bacteria</taxon>
        <taxon>Bacillati</taxon>
        <taxon>Bacillota</taxon>
        <taxon>Bacilli</taxon>
        <taxon>Bacillales</taxon>
        <taxon>Staphylococcaceae</taxon>
        <taxon>Staphylococcus</taxon>
    </lineage>
</organism>
<reference key="1">
    <citation type="journal article" date="2005" name="Proc. Natl. Acad. Sci. U.S.A.">
        <title>Whole genome sequence of Staphylococcus saprophyticus reveals the pathogenesis of uncomplicated urinary tract infection.</title>
        <authorList>
            <person name="Kuroda M."/>
            <person name="Yamashita A."/>
            <person name="Hirakawa H."/>
            <person name="Kumano M."/>
            <person name="Morikawa K."/>
            <person name="Higashide M."/>
            <person name="Maruyama A."/>
            <person name="Inose Y."/>
            <person name="Matoba K."/>
            <person name="Toh H."/>
            <person name="Kuhara S."/>
            <person name="Hattori M."/>
            <person name="Ohta T."/>
        </authorList>
    </citation>
    <scope>NUCLEOTIDE SEQUENCE [LARGE SCALE GENOMIC DNA]</scope>
    <source>
        <strain>ATCC 15305 / DSM 20229 / NCIMB 8711 / NCTC 7292 / S-41</strain>
    </source>
</reference>
<evidence type="ECO:0000255" key="1">
    <source>
        <dbReference type="HAMAP-Rule" id="MF_01854"/>
    </source>
</evidence>
<gene>
    <name evidence="1" type="primary">fbp</name>
    <name type="ordered locus">SSP0398</name>
</gene>
<proteinExistence type="inferred from homology"/>
<sequence length="650" mass="75445">MQKSADKSLKDRYLDLLSQQFNTKEELATEIINLESILELPKGTEHFVSDLHGEFHAFQHVLRNGSGNVRSKINDIFQDTLTRKEINEFSALVYYPEEKLKIIKNSFSSKSELNEWYITTINRLIKLITYASSKYTRTKLRKSLPKNYVFIIEELLYKSNKYNNKHSYYETLINQIIELEQSDDLIIGLSFTVQHLVVDHLHVVGDIYDRGPEPDKIMETLIDYPSVDIQWGNHDVLWIGAYAGSKVCLANLLRICARYDNLDIIEDAYGINLRPLLTLAEKHYDGKNKAFRPKNAEGLTELELEQITKIHQAIAIIQFKLEAPIIKRRPTFEMEERLVLESINYEKNEATLYGKTYPLENTCFQTIDPNGPNKLTDEESEVMDKLLLSVQQSEKLKRHMTFLMQKGTLYLPYNGNLLIHGCIPVDENGEMESMVINDVKCYGRDLLDHFEDYVREAFDHKDIQDDLATDLVWYLWTGKYSSLFGKRAMTTFERYFIKDKTAHKETKNPYYHLREDVNMCKKMLKDFGLDPEQGHIINGHTPVKEIDGEDPIKAEGKMIVIDGGFSKAYQSTTGIAGYTLLYNSFGMQLVAHQHFNSKKHVLLNGADELSIRRVVDKELQRQKIRHTNTGQDIQEKIDILKELMHDRYVN</sequence>
<name>F16PC_STAS1</name>
<accession>Q4A071</accession>
<dbReference type="EC" id="3.1.3.11" evidence="1"/>
<dbReference type="EMBL" id="AP008934">
    <property type="protein sequence ID" value="BAE17543.1"/>
    <property type="molecule type" value="Genomic_DNA"/>
</dbReference>
<dbReference type="RefSeq" id="WP_011302371.1">
    <property type="nucleotide sequence ID" value="NZ_MTGA01000036.1"/>
</dbReference>
<dbReference type="GeneID" id="3616263"/>
<dbReference type="KEGG" id="ssp:SSP0398"/>
<dbReference type="PATRIC" id="fig|342451.11.peg.403"/>
<dbReference type="eggNOG" id="COG3855">
    <property type="taxonomic scope" value="Bacteria"/>
</dbReference>
<dbReference type="HOGENOM" id="CLU_028392_2_0_9"/>
<dbReference type="OrthoDB" id="9779903at2"/>
<dbReference type="UniPathway" id="UPA00138"/>
<dbReference type="Proteomes" id="UP000006371">
    <property type="component" value="Chromosome"/>
</dbReference>
<dbReference type="GO" id="GO:0042132">
    <property type="term" value="F:fructose 1,6-bisphosphate 1-phosphatase activity"/>
    <property type="evidence" value="ECO:0007669"/>
    <property type="project" value="UniProtKB-UniRule"/>
</dbReference>
<dbReference type="GO" id="GO:0006094">
    <property type="term" value="P:gluconeogenesis"/>
    <property type="evidence" value="ECO:0007669"/>
    <property type="project" value="UniProtKB-UniRule"/>
</dbReference>
<dbReference type="Gene3D" id="3.60.21.10">
    <property type="match status" value="1"/>
</dbReference>
<dbReference type="HAMAP" id="MF_01854">
    <property type="entry name" value="FBPase_class3"/>
    <property type="match status" value="1"/>
</dbReference>
<dbReference type="InterPro" id="IPR009164">
    <property type="entry name" value="FBPtase_class3"/>
</dbReference>
<dbReference type="InterPro" id="IPR029052">
    <property type="entry name" value="Metallo-depent_PP-like"/>
</dbReference>
<dbReference type="Pfam" id="PF06874">
    <property type="entry name" value="FBPase_2"/>
    <property type="match status" value="1"/>
</dbReference>
<dbReference type="PIRSF" id="PIRSF000906">
    <property type="entry name" value="FBPtase_Bacill"/>
    <property type="match status" value="1"/>
</dbReference>
<dbReference type="SUPFAM" id="SSF56300">
    <property type="entry name" value="Metallo-dependent phosphatases"/>
    <property type="match status" value="2"/>
</dbReference>
<protein>
    <recommendedName>
        <fullName evidence="1">Fructose-1,6-bisphosphatase class 3</fullName>
        <shortName evidence="1">FBPase class 3</shortName>
        <ecNumber evidence="1">3.1.3.11</ecNumber>
    </recommendedName>
    <alternativeName>
        <fullName evidence="1">D-fructose-1,6-bisphosphate 1-phosphohydrolase class 3</fullName>
    </alternativeName>
</protein>
<feature type="chain" id="PRO_0000359999" description="Fructose-1,6-bisphosphatase class 3">
    <location>
        <begin position="1"/>
        <end position="650"/>
    </location>
</feature>
<comment type="catalytic activity">
    <reaction evidence="1">
        <text>beta-D-fructose 1,6-bisphosphate + H2O = beta-D-fructose 6-phosphate + phosphate</text>
        <dbReference type="Rhea" id="RHEA:11064"/>
        <dbReference type="ChEBI" id="CHEBI:15377"/>
        <dbReference type="ChEBI" id="CHEBI:32966"/>
        <dbReference type="ChEBI" id="CHEBI:43474"/>
        <dbReference type="ChEBI" id="CHEBI:57634"/>
        <dbReference type="EC" id="3.1.3.11"/>
    </reaction>
</comment>
<comment type="cofactor">
    <cofactor evidence="1">
        <name>Mn(2+)</name>
        <dbReference type="ChEBI" id="CHEBI:29035"/>
    </cofactor>
</comment>
<comment type="pathway">
    <text evidence="1">Carbohydrate biosynthesis; gluconeogenesis.</text>
</comment>
<comment type="similarity">
    <text evidence="1">Belongs to the FBPase class 3 family.</text>
</comment>